<feature type="chain" id="PRO_0000151950" description="ATP phosphoribosyltransferase">
    <location>
        <begin position="1"/>
        <end position="203"/>
    </location>
</feature>
<keyword id="KW-0028">Amino-acid biosynthesis</keyword>
<keyword id="KW-0067">ATP-binding</keyword>
<keyword id="KW-0963">Cytoplasm</keyword>
<keyword id="KW-0328">Glycosyltransferase</keyword>
<keyword id="KW-0368">Histidine biosynthesis</keyword>
<keyword id="KW-0547">Nucleotide-binding</keyword>
<keyword id="KW-1185">Reference proteome</keyword>
<keyword id="KW-0808">Transferase</keyword>
<name>HIS1_THEKO</name>
<proteinExistence type="inferred from homology"/>
<organism>
    <name type="scientific">Thermococcus kodakarensis (strain ATCC BAA-918 / JCM 12380 / KOD1)</name>
    <name type="common">Pyrococcus kodakaraensis (strain KOD1)</name>
    <dbReference type="NCBI Taxonomy" id="69014"/>
    <lineage>
        <taxon>Archaea</taxon>
        <taxon>Methanobacteriati</taxon>
        <taxon>Methanobacteriota</taxon>
        <taxon>Thermococci</taxon>
        <taxon>Thermococcales</taxon>
        <taxon>Thermococcaceae</taxon>
        <taxon>Thermococcus</taxon>
    </lineage>
</organism>
<sequence length="203" mass="22335">MRFVLPKGRLLKPSIEFLRKAGVELELPNGRELVSADGRVLLARAFDVPVYVEHGVEVGIAGSDVVLERGSDVFIPLELPFGKCRISVAVPGERKRYPEDMDCFRIATKYPRIASSYFDSIGVDVEVMKLHGSVELSVRTGIADAIVDIVETGQTLRENGLVEVAKVMDVSALLLVNRIAQKVLFDEINELVMKLRGVLDEGA</sequence>
<accession>Q5JFR6</accession>
<protein>
    <recommendedName>
        <fullName evidence="1">ATP phosphoribosyltransferase</fullName>
        <shortName evidence="1">ATP-PRT</shortName>
        <shortName evidence="1">ATP-PRTase</shortName>
        <ecNumber evidence="1">2.4.2.17</ecNumber>
    </recommendedName>
</protein>
<dbReference type="EC" id="2.4.2.17" evidence="1"/>
<dbReference type="EMBL" id="AP006878">
    <property type="protein sequence ID" value="BAD84432.1"/>
    <property type="molecule type" value="Genomic_DNA"/>
</dbReference>
<dbReference type="RefSeq" id="WP_011249198.1">
    <property type="nucleotide sequence ID" value="NC_006624.1"/>
</dbReference>
<dbReference type="SMR" id="Q5JFR6"/>
<dbReference type="FunCoup" id="Q5JFR6">
    <property type="interactions" value="140"/>
</dbReference>
<dbReference type="STRING" id="69014.TK0243"/>
<dbReference type="EnsemblBacteria" id="BAD84432">
    <property type="protein sequence ID" value="BAD84432"/>
    <property type="gene ID" value="TK0243"/>
</dbReference>
<dbReference type="GeneID" id="78446747"/>
<dbReference type="KEGG" id="tko:TK0243"/>
<dbReference type="PATRIC" id="fig|69014.16.peg.242"/>
<dbReference type="eggNOG" id="arCOG02208">
    <property type="taxonomic scope" value="Archaea"/>
</dbReference>
<dbReference type="HOGENOM" id="CLU_038115_2_0_2"/>
<dbReference type="InParanoid" id="Q5JFR6"/>
<dbReference type="OrthoDB" id="33116at2157"/>
<dbReference type="PhylomeDB" id="Q5JFR6"/>
<dbReference type="UniPathway" id="UPA00031">
    <property type="reaction ID" value="UER00006"/>
</dbReference>
<dbReference type="Proteomes" id="UP000000536">
    <property type="component" value="Chromosome"/>
</dbReference>
<dbReference type="GO" id="GO:0005737">
    <property type="term" value="C:cytoplasm"/>
    <property type="evidence" value="ECO:0007669"/>
    <property type="project" value="UniProtKB-SubCell"/>
</dbReference>
<dbReference type="GO" id="GO:0005524">
    <property type="term" value="F:ATP binding"/>
    <property type="evidence" value="ECO:0007669"/>
    <property type="project" value="UniProtKB-KW"/>
</dbReference>
<dbReference type="GO" id="GO:0003879">
    <property type="term" value="F:ATP phosphoribosyltransferase activity"/>
    <property type="evidence" value="ECO:0000318"/>
    <property type="project" value="GO_Central"/>
</dbReference>
<dbReference type="GO" id="GO:0000105">
    <property type="term" value="P:L-histidine biosynthetic process"/>
    <property type="evidence" value="ECO:0000318"/>
    <property type="project" value="GO_Central"/>
</dbReference>
<dbReference type="CDD" id="cd13595">
    <property type="entry name" value="PBP2_HisGs"/>
    <property type="match status" value="1"/>
</dbReference>
<dbReference type="FunFam" id="3.40.190.10:FF:000008">
    <property type="entry name" value="ATP phosphoribosyltransferase"/>
    <property type="match status" value="1"/>
</dbReference>
<dbReference type="Gene3D" id="3.40.190.10">
    <property type="entry name" value="Periplasmic binding protein-like II"/>
    <property type="match status" value="2"/>
</dbReference>
<dbReference type="HAMAP" id="MF_01018">
    <property type="entry name" value="HisG_Short"/>
    <property type="match status" value="1"/>
</dbReference>
<dbReference type="InterPro" id="IPR013820">
    <property type="entry name" value="ATP_PRibTrfase_cat"/>
</dbReference>
<dbReference type="InterPro" id="IPR018198">
    <property type="entry name" value="ATP_PRibTrfase_CS"/>
</dbReference>
<dbReference type="InterPro" id="IPR001348">
    <property type="entry name" value="ATP_PRibTrfase_HisG"/>
</dbReference>
<dbReference type="InterPro" id="IPR024893">
    <property type="entry name" value="ATP_PRibTrfase_HisG_short"/>
</dbReference>
<dbReference type="NCBIfam" id="TIGR00070">
    <property type="entry name" value="hisG"/>
    <property type="match status" value="1"/>
</dbReference>
<dbReference type="PANTHER" id="PTHR21403:SF10">
    <property type="entry name" value="ATP PHOSPHORIBOSYLTRANSFERASE"/>
    <property type="match status" value="1"/>
</dbReference>
<dbReference type="PANTHER" id="PTHR21403">
    <property type="entry name" value="ATP PHOSPHORIBOSYLTRANSFERASE ATP-PRTASE"/>
    <property type="match status" value="1"/>
</dbReference>
<dbReference type="Pfam" id="PF01634">
    <property type="entry name" value="HisG"/>
    <property type="match status" value="1"/>
</dbReference>
<dbReference type="SUPFAM" id="SSF53850">
    <property type="entry name" value="Periplasmic binding protein-like II"/>
    <property type="match status" value="1"/>
</dbReference>
<dbReference type="PROSITE" id="PS01316">
    <property type="entry name" value="ATP_P_PHORIBOSYLTR"/>
    <property type="match status" value="1"/>
</dbReference>
<evidence type="ECO:0000255" key="1">
    <source>
        <dbReference type="HAMAP-Rule" id="MF_01018"/>
    </source>
</evidence>
<comment type="function">
    <text evidence="1">Catalyzes the condensation of ATP and 5-phosphoribose 1-diphosphate to form N'-(5'-phosphoribosyl)-ATP (PR-ATP). Has a crucial role in the pathway because the rate of histidine biosynthesis seems to be controlled primarily by regulation of HisG enzymatic activity.</text>
</comment>
<comment type="catalytic activity">
    <reaction evidence="1">
        <text>1-(5-phospho-beta-D-ribosyl)-ATP + diphosphate = 5-phospho-alpha-D-ribose 1-diphosphate + ATP</text>
        <dbReference type="Rhea" id="RHEA:18473"/>
        <dbReference type="ChEBI" id="CHEBI:30616"/>
        <dbReference type="ChEBI" id="CHEBI:33019"/>
        <dbReference type="ChEBI" id="CHEBI:58017"/>
        <dbReference type="ChEBI" id="CHEBI:73183"/>
        <dbReference type="EC" id="2.4.2.17"/>
    </reaction>
</comment>
<comment type="pathway">
    <text evidence="1">Amino-acid biosynthesis; L-histidine biosynthesis; L-histidine from 5-phospho-alpha-D-ribose 1-diphosphate: step 1/9.</text>
</comment>
<comment type="subcellular location">
    <subcellularLocation>
        <location evidence="1">Cytoplasm</location>
    </subcellularLocation>
</comment>
<comment type="similarity">
    <text evidence="1">Belongs to the ATP phosphoribosyltransferase family. Short subfamily.</text>
</comment>
<gene>
    <name evidence="1" type="primary">hisG</name>
    <name type="ordered locus">TK0243</name>
</gene>
<reference key="1">
    <citation type="journal article" date="2005" name="Genome Res.">
        <title>Complete genome sequence of the hyperthermophilic archaeon Thermococcus kodakaraensis KOD1 and comparison with Pyrococcus genomes.</title>
        <authorList>
            <person name="Fukui T."/>
            <person name="Atomi H."/>
            <person name="Kanai T."/>
            <person name="Matsumi R."/>
            <person name="Fujiwara S."/>
            <person name="Imanaka T."/>
        </authorList>
    </citation>
    <scope>NUCLEOTIDE SEQUENCE [LARGE SCALE GENOMIC DNA]</scope>
    <source>
        <strain>ATCC BAA-918 / JCM 12380 / KOD1</strain>
    </source>
</reference>